<name>NU1C_LOBMA</name>
<organism>
    <name type="scientific">Lobularia maritima</name>
    <name type="common">Sweet alyssum</name>
    <name type="synonym">Alyssum maritimum</name>
    <dbReference type="NCBI Taxonomy" id="226051"/>
    <lineage>
        <taxon>Eukaryota</taxon>
        <taxon>Viridiplantae</taxon>
        <taxon>Streptophyta</taxon>
        <taxon>Embryophyta</taxon>
        <taxon>Tracheophyta</taxon>
        <taxon>Spermatophyta</taxon>
        <taxon>Magnoliopsida</taxon>
        <taxon>eudicotyledons</taxon>
        <taxon>Gunneridae</taxon>
        <taxon>Pentapetalae</taxon>
        <taxon>rosids</taxon>
        <taxon>malvids</taxon>
        <taxon>Brassicales</taxon>
        <taxon>Brassicaceae</taxon>
        <taxon>Anastaticeae</taxon>
        <taxon>Lobularia</taxon>
    </lineage>
</organism>
<feature type="chain" id="PRO_0000298873" description="NAD(P)H-quinone oxidoreductase subunit 1, chloroplastic">
    <location>
        <begin position="1"/>
        <end position="360"/>
    </location>
</feature>
<feature type="transmembrane region" description="Helical" evidence="1">
    <location>
        <begin position="27"/>
        <end position="47"/>
    </location>
</feature>
<feature type="transmembrane region" description="Helical" evidence="1">
    <location>
        <begin position="98"/>
        <end position="118"/>
    </location>
</feature>
<feature type="transmembrane region" description="Helical" evidence="1">
    <location>
        <begin position="129"/>
        <end position="149"/>
    </location>
</feature>
<feature type="transmembrane region" description="Helical" evidence="1">
    <location>
        <begin position="165"/>
        <end position="185"/>
    </location>
</feature>
<feature type="transmembrane region" description="Helical" evidence="1">
    <location>
        <begin position="203"/>
        <end position="223"/>
    </location>
</feature>
<feature type="transmembrane region" description="Helical" evidence="1">
    <location>
        <begin position="253"/>
        <end position="273"/>
    </location>
</feature>
<feature type="transmembrane region" description="Helical" evidence="1">
    <location>
        <begin position="297"/>
        <end position="317"/>
    </location>
</feature>
<feature type="transmembrane region" description="Helical" evidence="1">
    <location>
        <begin position="340"/>
        <end position="360"/>
    </location>
</feature>
<comment type="function">
    <text evidence="1">NDH shuttles electrons from NAD(P)H:plastoquinone, via FMN and iron-sulfur (Fe-S) centers, to quinones in the photosynthetic chain and possibly in a chloroplast respiratory chain. The immediate electron acceptor for the enzyme in this species is believed to be plastoquinone. Couples the redox reaction to proton translocation, and thus conserves the redox energy in a proton gradient.</text>
</comment>
<comment type="catalytic activity">
    <reaction evidence="1">
        <text>a plastoquinone + NADH + (n+1) H(+)(in) = a plastoquinol + NAD(+) + n H(+)(out)</text>
        <dbReference type="Rhea" id="RHEA:42608"/>
        <dbReference type="Rhea" id="RHEA-COMP:9561"/>
        <dbReference type="Rhea" id="RHEA-COMP:9562"/>
        <dbReference type="ChEBI" id="CHEBI:15378"/>
        <dbReference type="ChEBI" id="CHEBI:17757"/>
        <dbReference type="ChEBI" id="CHEBI:57540"/>
        <dbReference type="ChEBI" id="CHEBI:57945"/>
        <dbReference type="ChEBI" id="CHEBI:62192"/>
    </reaction>
</comment>
<comment type="catalytic activity">
    <reaction evidence="1">
        <text>a plastoquinone + NADPH + (n+1) H(+)(in) = a plastoquinol + NADP(+) + n H(+)(out)</text>
        <dbReference type="Rhea" id="RHEA:42612"/>
        <dbReference type="Rhea" id="RHEA-COMP:9561"/>
        <dbReference type="Rhea" id="RHEA-COMP:9562"/>
        <dbReference type="ChEBI" id="CHEBI:15378"/>
        <dbReference type="ChEBI" id="CHEBI:17757"/>
        <dbReference type="ChEBI" id="CHEBI:57783"/>
        <dbReference type="ChEBI" id="CHEBI:58349"/>
        <dbReference type="ChEBI" id="CHEBI:62192"/>
    </reaction>
</comment>
<comment type="subunit">
    <text evidence="1">NDH is composed of at least 16 different subunits, 5 of which are encoded in the nucleus.</text>
</comment>
<comment type="subcellular location">
    <subcellularLocation>
        <location evidence="1">Plastid</location>
        <location evidence="1">Chloroplast thylakoid membrane</location>
        <topology evidence="1">Multi-pass membrane protein</topology>
    </subcellularLocation>
</comment>
<comment type="similarity">
    <text evidence="1">Belongs to the complex I subunit 1 family.</text>
</comment>
<proteinExistence type="inferred from homology"/>
<accession>A4QLQ2</accession>
<reference key="1">
    <citation type="submission" date="2007-03" db="EMBL/GenBank/DDBJ databases">
        <title>Sequencing analysis of Lobularia maritima chloroplast DNA.</title>
        <authorList>
            <person name="Hosouchi T."/>
            <person name="Tsuruoka H."/>
            <person name="Kotani H."/>
        </authorList>
    </citation>
    <scope>NUCLEOTIDE SEQUENCE [LARGE SCALE GENOMIC DNA]</scope>
</reference>
<sequence length="360" mass="40045">MIIYATEVQTINSFVRLESLKEVYGFIWIFVPIFSLVLGIITGVLVIVWLEREISAGIQQRIGPEYAGPLGILQALADGTKLLFKEDLRPSRGNTPLFSIGPSIAVISILLSYSIIPFSNHLVLADLNIGIFLWIAISSIAPIGLLMSGYGSNNKYSFLGGLRAAAQSISYEIPLTLCVLSISLLSNSLSTVDIVEAQSKYGFWGWNLWRQPIGFIIFLISSLAECERLPFDLPEAEEELIAGYQTEYSGIKFGLFYVASYLNLLISSLFVTVLYLGGWNISIPHISILKLFEGDQIFGTTIGIFITLAKTYLFLFISIATRWTLPRLRMDQLLNLGWKFLLPISLGNLLLTTSFQLFSL</sequence>
<evidence type="ECO:0000255" key="1">
    <source>
        <dbReference type="HAMAP-Rule" id="MF_01350"/>
    </source>
</evidence>
<protein>
    <recommendedName>
        <fullName evidence="1">NAD(P)H-quinone oxidoreductase subunit 1, chloroplastic</fullName>
        <ecNumber evidence="1">7.1.1.-</ecNumber>
    </recommendedName>
    <alternativeName>
        <fullName evidence="1">NAD(P)H dehydrogenase subunit 1</fullName>
        <shortName evidence="1">NDH subunit 1</shortName>
    </alternativeName>
    <alternativeName>
        <fullName evidence="1">NADH-plastoquinone oxidoreductase subunit 1</fullName>
    </alternativeName>
</protein>
<dbReference type="EC" id="7.1.1.-" evidence="1"/>
<dbReference type="EMBL" id="AP009375">
    <property type="protein sequence ID" value="BAF50607.1"/>
    <property type="molecule type" value="Genomic_DNA"/>
</dbReference>
<dbReference type="RefSeq" id="YP_001123782.1">
    <property type="nucleotide sequence ID" value="NC_009274.1"/>
</dbReference>
<dbReference type="SMR" id="A4QLQ2"/>
<dbReference type="GeneID" id="4964867"/>
<dbReference type="GO" id="GO:0009535">
    <property type="term" value="C:chloroplast thylakoid membrane"/>
    <property type="evidence" value="ECO:0007669"/>
    <property type="project" value="UniProtKB-SubCell"/>
</dbReference>
<dbReference type="GO" id="GO:0003954">
    <property type="term" value="F:NADH dehydrogenase activity"/>
    <property type="evidence" value="ECO:0007669"/>
    <property type="project" value="TreeGrafter"/>
</dbReference>
<dbReference type="GO" id="GO:0016655">
    <property type="term" value="F:oxidoreductase activity, acting on NAD(P)H, quinone or similar compound as acceptor"/>
    <property type="evidence" value="ECO:0007669"/>
    <property type="project" value="UniProtKB-UniRule"/>
</dbReference>
<dbReference type="GO" id="GO:0048038">
    <property type="term" value="F:quinone binding"/>
    <property type="evidence" value="ECO:0007669"/>
    <property type="project" value="UniProtKB-KW"/>
</dbReference>
<dbReference type="GO" id="GO:0009060">
    <property type="term" value="P:aerobic respiration"/>
    <property type="evidence" value="ECO:0007669"/>
    <property type="project" value="TreeGrafter"/>
</dbReference>
<dbReference type="GO" id="GO:0019684">
    <property type="term" value="P:photosynthesis, light reaction"/>
    <property type="evidence" value="ECO:0007669"/>
    <property type="project" value="UniProtKB-UniRule"/>
</dbReference>
<dbReference type="HAMAP" id="MF_01350">
    <property type="entry name" value="NDH1_NuoH"/>
    <property type="match status" value="1"/>
</dbReference>
<dbReference type="InterPro" id="IPR001694">
    <property type="entry name" value="NADH_UbQ_OxRdtase_su1/FPO"/>
</dbReference>
<dbReference type="InterPro" id="IPR018086">
    <property type="entry name" value="NADH_UbQ_OxRdtase_su1_CS"/>
</dbReference>
<dbReference type="NCBIfam" id="NF004741">
    <property type="entry name" value="PRK06076.1-2"/>
    <property type="match status" value="1"/>
</dbReference>
<dbReference type="PANTHER" id="PTHR11432">
    <property type="entry name" value="NADH DEHYDROGENASE SUBUNIT 1"/>
    <property type="match status" value="1"/>
</dbReference>
<dbReference type="PANTHER" id="PTHR11432:SF3">
    <property type="entry name" value="NADH-UBIQUINONE OXIDOREDUCTASE CHAIN 1"/>
    <property type="match status" value="1"/>
</dbReference>
<dbReference type="Pfam" id="PF00146">
    <property type="entry name" value="NADHdh"/>
    <property type="match status" value="1"/>
</dbReference>
<dbReference type="PROSITE" id="PS00667">
    <property type="entry name" value="COMPLEX1_ND1_1"/>
    <property type="match status" value="1"/>
</dbReference>
<dbReference type="PROSITE" id="PS00668">
    <property type="entry name" value="COMPLEX1_ND1_2"/>
    <property type="match status" value="1"/>
</dbReference>
<keyword id="KW-0150">Chloroplast</keyword>
<keyword id="KW-0472">Membrane</keyword>
<keyword id="KW-0520">NAD</keyword>
<keyword id="KW-0521">NADP</keyword>
<keyword id="KW-0934">Plastid</keyword>
<keyword id="KW-0618">Plastoquinone</keyword>
<keyword id="KW-0874">Quinone</keyword>
<keyword id="KW-0793">Thylakoid</keyword>
<keyword id="KW-1278">Translocase</keyword>
<keyword id="KW-0812">Transmembrane</keyword>
<keyword id="KW-1133">Transmembrane helix</keyword>
<gene>
    <name evidence="1" type="primary">ndhA</name>
</gene>
<geneLocation type="chloroplast"/>